<keyword id="KW-0002">3D-structure</keyword>
<keyword id="KW-0067">ATP-binding</keyword>
<keyword id="KW-1035">Host cytoplasm</keyword>
<keyword id="KW-1048">Host nucleus</keyword>
<keyword id="KW-0418">Kinase</keyword>
<keyword id="KW-0460">Magnesium</keyword>
<keyword id="KW-0479">Metal-binding</keyword>
<keyword id="KW-0547">Nucleotide-binding</keyword>
<keyword id="KW-0597">Phosphoprotein</keyword>
<keyword id="KW-0964">Secreted</keyword>
<keyword id="KW-0723">Serine/threonine-protein kinase</keyword>
<keyword id="KW-0808">Transferase</keyword>
<keyword id="KW-0843">Virulence</keyword>
<proteinExistence type="evidence at protein level"/>
<dbReference type="EC" id="2.7.11.1"/>
<dbReference type="EMBL" id="AE001439">
    <property type="protein sequence ID" value="AAD06516.1"/>
    <property type="molecule type" value="Genomic_DNA"/>
</dbReference>
<dbReference type="PIR" id="H71869">
    <property type="entry name" value="H71869"/>
</dbReference>
<dbReference type="RefSeq" id="WP_001142065.1">
    <property type="nucleotide sequence ID" value="NC_000921.1"/>
</dbReference>
<dbReference type="PDB" id="3AKJ">
    <property type="method" value="X-ray"/>
    <property type="resolution" value="2.00 A"/>
    <property type="chains" value="A/B=1-325"/>
</dbReference>
<dbReference type="PDB" id="3AKK">
    <property type="method" value="X-ray"/>
    <property type="resolution" value="2.50 A"/>
    <property type="chains" value="A/B/C/D=1-325"/>
</dbReference>
<dbReference type="PDB" id="3AKL">
    <property type="method" value="X-ray"/>
    <property type="resolution" value="2.90 A"/>
    <property type="chains" value="A/B/C/D=1-325"/>
</dbReference>
<dbReference type="PDBsum" id="3AKJ"/>
<dbReference type="PDBsum" id="3AKK"/>
<dbReference type="PDBsum" id="3AKL"/>
<dbReference type="SMR" id="Q9ZKJ5"/>
<dbReference type="KEGG" id="hpj:jhp_0940"/>
<dbReference type="PATRIC" id="fig|85963.30.peg.1656"/>
<dbReference type="eggNOG" id="COG3550">
    <property type="taxonomic scope" value="Bacteria"/>
</dbReference>
<dbReference type="EvolutionaryTrace" id="Q9ZKJ5"/>
<dbReference type="Proteomes" id="UP000000804">
    <property type="component" value="Chromosome"/>
</dbReference>
<dbReference type="GO" id="GO:0005576">
    <property type="term" value="C:extracellular region"/>
    <property type="evidence" value="ECO:0007669"/>
    <property type="project" value="UniProtKB-SubCell"/>
</dbReference>
<dbReference type="GO" id="GO:0044164">
    <property type="term" value="C:host cell cytosol"/>
    <property type="evidence" value="ECO:0000314"/>
    <property type="project" value="UniProtKB"/>
</dbReference>
<dbReference type="GO" id="GO:0042025">
    <property type="term" value="C:host cell nucleus"/>
    <property type="evidence" value="ECO:0000314"/>
    <property type="project" value="UniProtKB"/>
</dbReference>
<dbReference type="GO" id="GO:0005524">
    <property type="term" value="F:ATP binding"/>
    <property type="evidence" value="ECO:0007669"/>
    <property type="project" value="UniProtKB-KW"/>
</dbReference>
<dbReference type="GO" id="GO:0000287">
    <property type="term" value="F:magnesium ion binding"/>
    <property type="evidence" value="ECO:0000314"/>
    <property type="project" value="UniProtKB"/>
</dbReference>
<dbReference type="GO" id="GO:0000166">
    <property type="term" value="F:nucleotide binding"/>
    <property type="evidence" value="ECO:0000314"/>
    <property type="project" value="UniProtKB"/>
</dbReference>
<dbReference type="GO" id="GO:0106310">
    <property type="term" value="F:protein serine kinase activity"/>
    <property type="evidence" value="ECO:0007669"/>
    <property type="project" value="RHEA"/>
</dbReference>
<dbReference type="GO" id="GO:0004674">
    <property type="term" value="F:protein serine/threonine kinase activity"/>
    <property type="evidence" value="ECO:0000314"/>
    <property type="project" value="UniProtKB"/>
</dbReference>
<dbReference type="GO" id="GO:0001819">
    <property type="term" value="P:positive regulation of cytokine production"/>
    <property type="evidence" value="ECO:0000314"/>
    <property type="project" value="UniProtKB"/>
</dbReference>
<dbReference type="GO" id="GO:0051092">
    <property type="term" value="P:positive regulation of NF-kappaB transcription factor activity"/>
    <property type="evidence" value="ECO:0000314"/>
    <property type="project" value="UniProtKB"/>
</dbReference>
<dbReference type="GO" id="GO:1901224">
    <property type="term" value="P:positive regulation of non-canonical NF-kappaB signal transduction"/>
    <property type="evidence" value="ECO:0000314"/>
    <property type="project" value="UniProtKB"/>
</dbReference>
<dbReference type="GO" id="GO:0033138">
    <property type="term" value="P:positive regulation of peptidyl-serine phosphorylation"/>
    <property type="evidence" value="ECO:0000314"/>
    <property type="project" value="UniProtKB"/>
</dbReference>
<dbReference type="GO" id="GO:0085033">
    <property type="term" value="P:symbiont-mediated activation of host NF-kappaB cascade"/>
    <property type="evidence" value="ECO:0000269"/>
    <property type="project" value="SigSci"/>
</dbReference>
<dbReference type="CDD" id="cd17792">
    <property type="entry name" value="CtkA"/>
    <property type="match status" value="1"/>
</dbReference>
<dbReference type="Gene3D" id="1.10.1070.20">
    <property type="match status" value="1"/>
</dbReference>
<dbReference type="Gene3D" id="3.30.200.120">
    <property type="match status" value="1"/>
</dbReference>
<dbReference type="InterPro" id="IPR012893">
    <property type="entry name" value="HipA-like_C"/>
</dbReference>
<dbReference type="Pfam" id="PF07804">
    <property type="entry name" value="HipA_C"/>
    <property type="match status" value="1"/>
</dbReference>
<reference key="1">
    <citation type="journal article" date="1999" name="Nature">
        <title>Genomic sequence comparison of two unrelated isolates of the human gastric pathogen Helicobacter pylori.</title>
        <authorList>
            <person name="Alm R.A."/>
            <person name="Ling L.-S.L."/>
            <person name="Moir D.T."/>
            <person name="King B.L."/>
            <person name="Brown E.D."/>
            <person name="Doig P.C."/>
            <person name="Smith D.R."/>
            <person name="Noonan B."/>
            <person name="Guild B.C."/>
            <person name="deJonge B.L."/>
            <person name="Carmel G."/>
            <person name="Tummino P.J."/>
            <person name="Caruso A."/>
            <person name="Uria-Nickelsen M."/>
            <person name="Mills D.M."/>
            <person name="Ives C."/>
            <person name="Gibson R."/>
            <person name="Merberg D."/>
            <person name="Mills S.D."/>
            <person name="Jiang Q."/>
            <person name="Taylor D.E."/>
            <person name="Vovis G.F."/>
            <person name="Trust T.J."/>
        </authorList>
    </citation>
    <scope>NUCLEOTIDE SEQUENCE [LARGE SCALE GENOMIC DNA]</scope>
    <source>
        <strain>J99 / ATCC 700824</strain>
    </source>
</reference>
<reference key="2">
    <citation type="journal article" date="2002" name="Gastroenterology">
        <title>Global analysis of Helicobacter pylori gene expression in human gastric mucosa.</title>
        <authorList>
            <person name="Graham J.E."/>
            <person name="Peek R.M. Jr."/>
            <person name="Krishna U."/>
            <person name="Cover T.L."/>
        </authorList>
    </citation>
    <scope>INDUCTION</scope>
    <source>
        <strain>J99 / ATCC 700824</strain>
    </source>
</reference>
<reference key="3">
    <citation type="journal article" date="2008" name="J. Bacteriol.">
        <title>Novel protein antigen (JHP940) from the genomic plasticity region of Helicobacter pylori induces tumor necrosis factor alpha and interleukin-8 secretion by human macrophages.</title>
        <authorList>
            <person name="Rizwan M."/>
            <person name="Alvi A."/>
            <person name="Ahmed N."/>
        </authorList>
    </citation>
    <scope>FUNCTION</scope>
    <source>
        <strain>J99 / ATCC 700824</strain>
    </source>
</reference>
<reference key="4">
    <citation type="journal article" date="2010" name="Proc. Natl. Acad. Sci. U.S.A.">
        <title>Helicobacter pylori proinflammatory protein up-regulates NF-kappaB as a cell-translocating Ser/Thr kinase.</title>
        <authorList>
            <person name="Kim D.J."/>
            <person name="Park K.S."/>
            <person name="Kim J.H."/>
            <person name="Yang S.H."/>
            <person name="Yoon J.Y."/>
            <person name="Han B.G."/>
            <person name="Kim H.S."/>
            <person name="Lee S.J."/>
            <person name="Jang J.Y."/>
            <person name="Kim K.H."/>
            <person name="Kim M.J."/>
            <person name="Song J.S."/>
            <person name="Kim H.J."/>
            <person name="Park C.M."/>
            <person name="Lee S.K."/>
            <person name="Lee B.I."/>
            <person name="Suh S.W."/>
        </authorList>
    </citation>
    <scope>X-RAY CRYSTALLOGRAPHY (2.00 ANGSTROMS) OF APOPROEIN AND IN COMPLEX WITH MG-ADP OR ATP ANALOG</scope>
    <scope>FUNCTION</scope>
    <scope>CATALYTIC ACTIVITY</scope>
    <scope>GENE NAME</scope>
    <scope>PHOSPHORYLATION</scope>
    <scope>SUBCELLULAR LOCATION</scope>
    <scope>DOMAIN</scope>
    <scope>MUTAGENESIS OF ASP-155 AND ASP-179</scope>
    <source>
        <strain>J99 / ATCC 700824</strain>
    </source>
</reference>
<evidence type="ECO:0000256" key="1">
    <source>
        <dbReference type="SAM" id="MobiDB-lite"/>
    </source>
</evidence>
<evidence type="ECO:0000269" key="2">
    <source>
    </source>
</evidence>
<evidence type="ECO:0000269" key="3">
    <source>
    </source>
</evidence>
<evidence type="ECO:0000269" key="4">
    <source>
    </source>
</evidence>
<evidence type="ECO:0007829" key="5">
    <source>
        <dbReference type="PDB" id="3AKJ"/>
    </source>
</evidence>
<evidence type="ECO:0007829" key="6">
    <source>
        <dbReference type="PDB" id="3AKK"/>
    </source>
</evidence>
<evidence type="ECO:0007829" key="7">
    <source>
        <dbReference type="PDB" id="3AKL"/>
    </source>
</evidence>
<accession>Q9ZKJ5</accession>
<comment type="function">
    <text evidence="3 4">Virulence factor acting as a pro-inflammatory protein that induces the secretion of the pro-inflammatory cytokines TNF-alpha (tumor necrosis factor-alpha) and IL-8 (interleukin-8) from human macrophages, as well as enhanced translocation of the transcription factor NF-kappa-B complex in macrophages. Is a kinase capable of autophosphorylating itself at a threonine residue near the N-terminus. Also leads to enhanced phosphorylation of the NF-kappa-B p65 subunit (RELA) at 'Ser-276' in human epithelial cancer cells; its kinase activity is required for this enhanced phosphorylation that up-regulates NF-kappa-B activity, but it does not directly phosphorylate this protein. Thus, the kinase activity of CtkA may play an important role in the induction of host inflammatory responses during H.pylori infection.</text>
</comment>
<comment type="catalytic activity">
    <reaction evidence="4">
        <text>L-seryl-[protein] + ATP = O-phospho-L-seryl-[protein] + ADP + H(+)</text>
        <dbReference type="Rhea" id="RHEA:17989"/>
        <dbReference type="Rhea" id="RHEA-COMP:9863"/>
        <dbReference type="Rhea" id="RHEA-COMP:11604"/>
        <dbReference type="ChEBI" id="CHEBI:15378"/>
        <dbReference type="ChEBI" id="CHEBI:29999"/>
        <dbReference type="ChEBI" id="CHEBI:30616"/>
        <dbReference type="ChEBI" id="CHEBI:83421"/>
        <dbReference type="ChEBI" id="CHEBI:456216"/>
        <dbReference type="EC" id="2.7.11.1"/>
    </reaction>
</comment>
<comment type="catalytic activity">
    <reaction evidence="4">
        <text>L-threonyl-[protein] + ATP = O-phospho-L-threonyl-[protein] + ADP + H(+)</text>
        <dbReference type="Rhea" id="RHEA:46608"/>
        <dbReference type="Rhea" id="RHEA-COMP:11060"/>
        <dbReference type="Rhea" id="RHEA-COMP:11605"/>
        <dbReference type="ChEBI" id="CHEBI:15378"/>
        <dbReference type="ChEBI" id="CHEBI:30013"/>
        <dbReference type="ChEBI" id="CHEBI:30616"/>
        <dbReference type="ChEBI" id="CHEBI:61977"/>
        <dbReference type="ChEBI" id="CHEBI:456216"/>
        <dbReference type="EC" id="2.7.11.1"/>
    </reaction>
</comment>
<comment type="subcellular location">
    <subcellularLocation>
        <location evidence="4">Secreted</location>
    </subcellularLocation>
    <subcellularLocation>
        <location evidence="4">Host cytoplasm</location>
        <location evidence="4">Host cytosol</location>
    </subcellularLocation>
    <subcellularLocation>
        <location evidence="4">Host nucleus</location>
    </subcellularLocation>
    <text>Translocates into cultured human cells. When examining the cellular location of the transiently expressed CtkA after 0, 12, 24, and 48 hours of transfection, the transiently expressed CtkA translocates from cytosol into nucleus in a time-dependent manner.</text>
</comment>
<comment type="induction">
    <text evidence="2">Is strongly expressed in response to the interaction of H.pylori with the mammalian gastric mucosa.</text>
</comment>
<comment type="domain">
    <text evidence="4">The C-terminal tail (residues 301-325) is not required for the kinase activity and for translocation into human cells.</text>
</comment>
<comment type="PTM">
    <text evidence="4">Autophosphorylates on either Thr-3 or Thr-7.</text>
</comment>
<sequence>MPTIDFTFCEINPKKGFGGANGNKISLFYNNELYMVKFPPKPSTHKEMSYTNGCFSEYVACHIVNSLGLKVQETLLGTYKNKIVVACKDFTTHQYELVDFLSLKNTMIELEKSGKDTNLNDVLYAIDNQHFIEPKVLKCFFWDMFVADTLLGNFDRHNGNWGFLRASNSKEYQIAPIFDCGSCLYPQADDVVCQKVLSNIDELNARIYNFPQSILKDDNDKKINYYDFLTQTNNKDCLDALLRIYPRIDMNKIHSIIDNTPFMSEIHKEFLHTMLDERKSKIIDVAHTRAIELSLQHKQAHSNPYDNADDLDNSNEYTPTPKRRR</sequence>
<feature type="chain" id="PRO_0000423370" description="Serine/threonine-protein kinase CtkA">
    <location>
        <begin position="1"/>
        <end position="325"/>
    </location>
</feature>
<feature type="region of interest" description="Disordered" evidence="1">
    <location>
        <begin position="296"/>
        <end position="325"/>
    </location>
</feature>
<feature type="binding site">
    <location>
        <begin position="21"/>
        <end position="24"/>
    </location>
    <ligand>
        <name>ATP</name>
        <dbReference type="ChEBI" id="CHEBI:30616"/>
    </ligand>
</feature>
<feature type="binding site">
    <location>
        <position position="37"/>
    </location>
    <ligand>
        <name>ATP</name>
        <dbReference type="ChEBI" id="CHEBI:30616"/>
    </ligand>
</feature>
<feature type="binding site">
    <location>
        <position position="72"/>
    </location>
    <ligand>
        <name>ATP</name>
        <dbReference type="ChEBI" id="CHEBI:30616"/>
    </ligand>
</feature>
<feature type="binding site">
    <location>
        <begin position="88"/>
        <end position="90"/>
    </location>
    <ligand>
        <name>ATP</name>
        <dbReference type="ChEBI" id="CHEBI:30616"/>
    </ligand>
</feature>
<feature type="binding site">
    <location>
        <position position="160"/>
    </location>
    <ligand>
        <name>Mg(2+)</name>
        <dbReference type="ChEBI" id="CHEBI:18420"/>
    </ligand>
</feature>
<feature type="binding site">
    <location>
        <position position="179"/>
    </location>
    <ligand>
        <name>ATP</name>
        <dbReference type="ChEBI" id="CHEBI:30616"/>
    </ligand>
</feature>
<feature type="binding site">
    <location>
        <position position="179"/>
    </location>
    <ligand>
        <name>Mg(2+)</name>
        <dbReference type="ChEBI" id="CHEBI:18420"/>
    </ligand>
</feature>
<feature type="mutagenesis site" description="Loss of kinase activity." evidence="4">
    <original>D</original>
    <variation>Q</variation>
    <location>
        <position position="155"/>
    </location>
</feature>
<feature type="mutagenesis site" description="Loss of kinase activity." evidence="4">
    <original>D</original>
    <variation>Q</variation>
    <location>
        <position position="179"/>
    </location>
</feature>
<feature type="strand" evidence="6">
    <location>
        <begin position="20"/>
        <end position="22"/>
    </location>
</feature>
<feature type="strand" evidence="5">
    <location>
        <begin position="24"/>
        <end position="29"/>
    </location>
</feature>
<feature type="strand" evidence="5">
    <location>
        <begin position="32"/>
        <end position="37"/>
    </location>
</feature>
<feature type="helix" evidence="5">
    <location>
        <begin position="53"/>
        <end position="66"/>
    </location>
</feature>
<feature type="strand" evidence="5">
    <location>
        <begin position="74"/>
        <end position="79"/>
    </location>
</feature>
<feature type="strand" evidence="5">
    <location>
        <begin position="82"/>
        <end position="88"/>
    </location>
</feature>
<feature type="strand" evidence="5">
    <location>
        <begin position="93"/>
        <end position="99"/>
    </location>
</feature>
<feature type="helix" evidence="5">
    <location>
        <begin position="100"/>
        <end position="105"/>
    </location>
</feature>
<feature type="helix" evidence="6">
    <location>
        <begin position="108"/>
        <end position="110"/>
    </location>
</feature>
<feature type="helix" evidence="5">
    <location>
        <begin position="119"/>
        <end position="128"/>
    </location>
</feature>
<feature type="strand" evidence="5">
    <location>
        <begin position="130"/>
        <end position="132"/>
    </location>
</feature>
<feature type="helix" evidence="5">
    <location>
        <begin position="134"/>
        <end position="151"/>
    </location>
</feature>
<feature type="helix" evidence="5">
    <location>
        <begin position="158"/>
        <end position="160"/>
    </location>
</feature>
<feature type="strand" evidence="5">
    <location>
        <begin position="162"/>
        <end position="170"/>
    </location>
</feature>
<feature type="strand" evidence="5">
    <location>
        <begin position="172"/>
        <end position="174"/>
    </location>
</feature>
<feature type="helix" evidence="5">
    <location>
        <begin position="190"/>
        <end position="197"/>
    </location>
</feature>
<feature type="helix" evidence="5">
    <location>
        <begin position="200"/>
        <end position="208"/>
    </location>
</feature>
<feature type="strand" evidence="6">
    <location>
        <begin position="213"/>
        <end position="216"/>
    </location>
</feature>
<feature type="strand" evidence="7">
    <location>
        <begin position="218"/>
        <end position="220"/>
    </location>
</feature>
<feature type="helix" evidence="5">
    <location>
        <begin position="225"/>
        <end position="231"/>
    </location>
</feature>
<feature type="helix" evidence="5">
    <location>
        <begin position="235"/>
        <end position="244"/>
    </location>
</feature>
<feature type="helix" evidence="5">
    <location>
        <begin position="245"/>
        <end position="247"/>
    </location>
</feature>
<feature type="helix" evidence="5">
    <location>
        <begin position="250"/>
        <end position="258"/>
    </location>
</feature>
<feature type="helix" evidence="5">
    <location>
        <begin position="265"/>
        <end position="281"/>
    </location>
</feature>
<feature type="helix" evidence="5">
    <location>
        <begin position="283"/>
        <end position="294"/>
    </location>
</feature>
<name>CTKA_HELPJ</name>
<protein>
    <recommendedName>
        <fullName>Serine/threonine-protein kinase CtkA</fullName>
        <shortName>Ser/Thr-protein kinase CtkA</shortName>
        <ecNumber>2.7.11.1</ecNumber>
    </recommendedName>
    <alternativeName>
        <fullName>Cell-translocating kinase A</fullName>
    </alternativeName>
</protein>
<gene>
    <name type="primary">ctkA</name>
    <name type="ordered locus">jhp_0940</name>
</gene>
<organism>
    <name type="scientific">Helicobacter pylori (strain J99 / ATCC 700824)</name>
    <name type="common">Campylobacter pylori J99</name>
    <dbReference type="NCBI Taxonomy" id="85963"/>
    <lineage>
        <taxon>Bacteria</taxon>
        <taxon>Pseudomonadati</taxon>
        <taxon>Campylobacterota</taxon>
        <taxon>Epsilonproteobacteria</taxon>
        <taxon>Campylobacterales</taxon>
        <taxon>Helicobacteraceae</taxon>
        <taxon>Helicobacter</taxon>
    </lineage>
</organism>